<proteinExistence type="inferred from homology"/>
<sequence>MSLKLAEKEQVVATLQTRLTRAQATVVAEYRGLTVAQMTVFRAEAQKQSVHVQVVKNTLLKRALAGTPFAVMDHLLKGPLVFAAAEDPVALAKLFTDHAKRLEKLVIIGGVLSGKQIDAAAIAQLSKMPSREELLAKLLGTMQAPVAGFVRTLNEVPSRFVRTLAAVRDQRAA</sequence>
<gene>
    <name evidence="1" type="primary">rplJ</name>
    <name type="ordered locus">AFE_0317</name>
</gene>
<keyword id="KW-1185">Reference proteome</keyword>
<keyword id="KW-0687">Ribonucleoprotein</keyword>
<keyword id="KW-0689">Ribosomal protein</keyword>
<keyword id="KW-0694">RNA-binding</keyword>
<keyword id="KW-0699">rRNA-binding</keyword>
<name>RL10_ACIF2</name>
<organism>
    <name type="scientific">Acidithiobacillus ferrooxidans (strain ATCC 23270 / DSM 14882 / CIP 104768 / NCIMB 8455)</name>
    <name type="common">Ferrobacillus ferrooxidans (strain ATCC 23270)</name>
    <dbReference type="NCBI Taxonomy" id="243159"/>
    <lineage>
        <taxon>Bacteria</taxon>
        <taxon>Pseudomonadati</taxon>
        <taxon>Pseudomonadota</taxon>
        <taxon>Acidithiobacillia</taxon>
        <taxon>Acidithiobacillales</taxon>
        <taxon>Acidithiobacillaceae</taxon>
        <taxon>Acidithiobacillus</taxon>
    </lineage>
</organism>
<evidence type="ECO:0000255" key="1">
    <source>
        <dbReference type="HAMAP-Rule" id="MF_00362"/>
    </source>
</evidence>
<evidence type="ECO:0000305" key="2"/>
<dbReference type="EMBL" id="CP001219">
    <property type="protein sequence ID" value="ACK79207.1"/>
    <property type="molecule type" value="Genomic_DNA"/>
</dbReference>
<dbReference type="RefSeq" id="WP_009568780.1">
    <property type="nucleotide sequence ID" value="NC_011761.1"/>
</dbReference>
<dbReference type="SMR" id="B7J457"/>
<dbReference type="STRING" id="243159.AFE_0317"/>
<dbReference type="PaxDb" id="243159-AFE_0317"/>
<dbReference type="GeneID" id="65279697"/>
<dbReference type="KEGG" id="afr:AFE_0317"/>
<dbReference type="eggNOG" id="COG0244">
    <property type="taxonomic scope" value="Bacteria"/>
</dbReference>
<dbReference type="HOGENOM" id="CLU_092227_0_0_6"/>
<dbReference type="Proteomes" id="UP000001362">
    <property type="component" value="Chromosome"/>
</dbReference>
<dbReference type="GO" id="GO:0015934">
    <property type="term" value="C:large ribosomal subunit"/>
    <property type="evidence" value="ECO:0007669"/>
    <property type="project" value="InterPro"/>
</dbReference>
<dbReference type="GO" id="GO:0070180">
    <property type="term" value="F:large ribosomal subunit rRNA binding"/>
    <property type="evidence" value="ECO:0007669"/>
    <property type="project" value="UniProtKB-UniRule"/>
</dbReference>
<dbReference type="GO" id="GO:0003735">
    <property type="term" value="F:structural constituent of ribosome"/>
    <property type="evidence" value="ECO:0007669"/>
    <property type="project" value="InterPro"/>
</dbReference>
<dbReference type="GO" id="GO:0006412">
    <property type="term" value="P:translation"/>
    <property type="evidence" value="ECO:0007669"/>
    <property type="project" value="UniProtKB-UniRule"/>
</dbReference>
<dbReference type="CDD" id="cd05797">
    <property type="entry name" value="Ribosomal_L10"/>
    <property type="match status" value="1"/>
</dbReference>
<dbReference type="Gene3D" id="3.30.70.1730">
    <property type="match status" value="1"/>
</dbReference>
<dbReference type="Gene3D" id="6.10.250.290">
    <property type="match status" value="1"/>
</dbReference>
<dbReference type="HAMAP" id="MF_00362">
    <property type="entry name" value="Ribosomal_uL10"/>
    <property type="match status" value="1"/>
</dbReference>
<dbReference type="InterPro" id="IPR001790">
    <property type="entry name" value="Ribosomal_uL10"/>
</dbReference>
<dbReference type="InterPro" id="IPR043141">
    <property type="entry name" value="Ribosomal_uL10-like_sf"/>
</dbReference>
<dbReference type="InterPro" id="IPR022973">
    <property type="entry name" value="Ribosomal_uL10_bac"/>
</dbReference>
<dbReference type="InterPro" id="IPR047865">
    <property type="entry name" value="Ribosomal_uL10_bac_type"/>
</dbReference>
<dbReference type="InterPro" id="IPR002363">
    <property type="entry name" value="Ribosomal_uL10_CS_bac"/>
</dbReference>
<dbReference type="NCBIfam" id="NF000955">
    <property type="entry name" value="PRK00099.1-1"/>
    <property type="match status" value="1"/>
</dbReference>
<dbReference type="PANTHER" id="PTHR11560">
    <property type="entry name" value="39S RIBOSOMAL PROTEIN L10, MITOCHONDRIAL"/>
    <property type="match status" value="1"/>
</dbReference>
<dbReference type="Pfam" id="PF00466">
    <property type="entry name" value="Ribosomal_L10"/>
    <property type="match status" value="1"/>
</dbReference>
<dbReference type="SUPFAM" id="SSF160369">
    <property type="entry name" value="Ribosomal protein L10-like"/>
    <property type="match status" value="1"/>
</dbReference>
<dbReference type="PROSITE" id="PS01109">
    <property type="entry name" value="RIBOSOMAL_L10"/>
    <property type="match status" value="1"/>
</dbReference>
<accession>B7J457</accession>
<comment type="function">
    <text evidence="1">Forms part of the ribosomal stalk, playing a central role in the interaction of the ribosome with GTP-bound translation factors.</text>
</comment>
<comment type="subunit">
    <text evidence="1">Part of the ribosomal stalk of the 50S ribosomal subunit. The N-terminus interacts with L11 and the large rRNA to form the base of the stalk. The C-terminus forms an elongated spine to which L12 dimers bind in a sequential fashion forming a multimeric L10(L12)X complex.</text>
</comment>
<comment type="similarity">
    <text evidence="1">Belongs to the universal ribosomal protein uL10 family.</text>
</comment>
<feature type="chain" id="PRO_1000120905" description="Large ribosomal subunit protein uL10">
    <location>
        <begin position="1"/>
        <end position="173"/>
    </location>
</feature>
<protein>
    <recommendedName>
        <fullName evidence="1">Large ribosomal subunit protein uL10</fullName>
    </recommendedName>
    <alternativeName>
        <fullName evidence="2">50S ribosomal protein L10</fullName>
    </alternativeName>
</protein>
<reference key="1">
    <citation type="journal article" date="2008" name="BMC Genomics">
        <title>Acidithiobacillus ferrooxidans metabolism: from genome sequence to industrial applications.</title>
        <authorList>
            <person name="Valdes J."/>
            <person name="Pedroso I."/>
            <person name="Quatrini R."/>
            <person name="Dodson R.J."/>
            <person name="Tettelin H."/>
            <person name="Blake R. II"/>
            <person name="Eisen J.A."/>
            <person name="Holmes D.S."/>
        </authorList>
    </citation>
    <scope>NUCLEOTIDE SEQUENCE [LARGE SCALE GENOMIC DNA]</scope>
    <source>
        <strain>ATCC 23270 / DSM 14882 / CIP 104768 / NCIMB 8455</strain>
    </source>
</reference>